<feature type="chain" id="PRO_0000330372" description="HssA/B-like protein 2">
    <location>
        <begin position="1"/>
        <end position="80"/>
    </location>
</feature>
<feature type="region of interest" description="Disordered" evidence="1">
    <location>
        <begin position="1"/>
        <end position="29"/>
    </location>
</feature>
<feature type="compositionally biased region" description="Low complexity" evidence="1">
    <location>
        <begin position="9"/>
        <end position="29"/>
    </location>
</feature>
<reference key="1">
    <citation type="journal article" date="2005" name="Nature">
        <title>The genome of the social amoeba Dictyostelium discoideum.</title>
        <authorList>
            <person name="Eichinger L."/>
            <person name="Pachebat J.A."/>
            <person name="Gloeckner G."/>
            <person name="Rajandream M.A."/>
            <person name="Sucgang R."/>
            <person name="Berriman M."/>
            <person name="Song J."/>
            <person name="Olsen R."/>
            <person name="Szafranski K."/>
            <person name="Xu Q."/>
            <person name="Tunggal B."/>
            <person name="Kummerfeld S."/>
            <person name="Madera M."/>
            <person name="Konfortov B.A."/>
            <person name="Rivero F."/>
            <person name="Bankier A.T."/>
            <person name="Lehmann R."/>
            <person name="Hamlin N."/>
            <person name="Davies R."/>
            <person name="Gaudet P."/>
            <person name="Fey P."/>
            <person name="Pilcher K."/>
            <person name="Chen G."/>
            <person name="Saunders D."/>
            <person name="Sodergren E.J."/>
            <person name="Davis P."/>
            <person name="Kerhornou A."/>
            <person name="Nie X."/>
            <person name="Hall N."/>
            <person name="Anjard C."/>
            <person name="Hemphill L."/>
            <person name="Bason N."/>
            <person name="Farbrother P."/>
            <person name="Desany B."/>
            <person name="Just E."/>
            <person name="Morio T."/>
            <person name="Rost R."/>
            <person name="Churcher C.M."/>
            <person name="Cooper J."/>
            <person name="Haydock S."/>
            <person name="van Driessche N."/>
            <person name="Cronin A."/>
            <person name="Goodhead I."/>
            <person name="Muzny D.M."/>
            <person name="Mourier T."/>
            <person name="Pain A."/>
            <person name="Lu M."/>
            <person name="Harper D."/>
            <person name="Lindsay R."/>
            <person name="Hauser H."/>
            <person name="James K.D."/>
            <person name="Quiles M."/>
            <person name="Madan Babu M."/>
            <person name="Saito T."/>
            <person name="Buchrieser C."/>
            <person name="Wardroper A."/>
            <person name="Felder M."/>
            <person name="Thangavelu M."/>
            <person name="Johnson D."/>
            <person name="Knights A."/>
            <person name="Loulseged H."/>
            <person name="Mungall K.L."/>
            <person name="Oliver K."/>
            <person name="Price C."/>
            <person name="Quail M.A."/>
            <person name="Urushihara H."/>
            <person name="Hernandez J."/>
            <person name="Rabbinowitsch E."/>
            <person name="Steffen D."/>
            <person name="Sanders M."/>
            <person name="Ma J."/>
            <person name="Kohara Y."/>
            <person name="Sharp S."/>
            <person name="Simmonds M.N."/>
            <person name="Spiegler S."/>
            <person name="Tivey A."/>
            <person name="Sugano S."/>
            <person name="White B."/>
            <person name="Walker D."/>
            <person name="Woodward J.R."/>
            <person name="Winckler T."/>
            <person name="Tanaka Y."/>
            <person name="Shaulsky G."/>
            <person name="Schleicher M."/>
            <person name="Weinstock G.M."/>
            <person name="Rosenthal A."/>
            <person name="Cox E.C."/>
            <person name="Chisholm R.L."/>
            <person name="Gibbs R.A."/>
            <person name="Loomis W.F."/>
            <person name="Platzer M."/>
            <person name="Kay R.R."/>
            <person name="Williams J.G."/>
            <person name="Dear P.H."/>
            <person name="Noegel A.A."/>
            <person name="Barrell B.G."/>
            <person name="Kuspa A."/>
        </authorList>
    </citation>
    <scope>NUCLEOTIDE SEQUENCE [LARGE SCALE GENOMIC DNA]</scope>
    <source>
        <strain>AX4</strain>
    </source>
</reference>
<protein>
    <recommendedName>
        <fullName>HssA/B-like protein 2</fullName>
    </recommendedName>
</protein>
<name>HSL2_DICDI</name>
<proteinExistence type="inferred from homology"/>
<organism>
    <name type="scientific">Dictyostelium discoideum</name>
    <name type="common">Social amoeba</name>
    <dbReference type="NCBI Taxonomy" id="44689"/>
    <lineage>
        <taxon>Eukaryota</taxon>
        <taxon>Amoebozoa</taxon>
        <taxon>Evosea</taxon>
        <taxon>Eumycetozoa</taxon>
        <taxon>Dictyostelia</taxon>
        <taxon>Dictyosteliales</taxon>
        <taxon>Dictyosteliaceae</taxon>
        <taxon>Dictyostelium</taxon>
    </lineage>
</organism>
<sequence length="80" mass="8000">MSLLSALTSISKPMNTSSKSSVSSKNVSGLSMGSNSIACGSCGGSYGYPGAGLLAIVDLNVNIDIDINLSATRSYSCGCN</sequence>
<gene>
    <name type="primary">hssl2</name>
    <name type="ORF">DDB_G0268400</name>
</gene>
<accession>Q55FV2</accession>
<dbReference type="EMBL" id="AAFI02000003">
    <property type="protein sequence ID" value="EAL73653.2"/>
    <property type="molecule type" value="Genomic_DNA"/>
</dbReference>
<dbReference type="RefSeq" id="XP_647431.2">
    <property type="nucleotide sequence ID" value="XM_642339.2"/>
</dbReference>
<dbReference type="FunCoup" id="Q55FV2">
    <property type="interactions" value="243"/>
</dbReference>
<dbReference type="PaxDb" id="44689-DDB0252805"/>
<dbReference type="EnsemblProtists" id="EAL73653">
    <property type="protein sequence ID" value="EAL73653"/>
    <property type="gene ID" value="DDB_G0268400"/>
</dbReference>
<dbReference type="GeneID" id="8616238"/>
<dbReference type="KEGG" id="ddi:DDB_G0268400"/>
<dbReference type="dictyBase" id="DDB_G0268400"/>
<dbReference type="eggNOG" id="ENOG502RIJ4">
    <property type="taxonomic scope" value="Eukaryota"/>
</dbReference>
<dbReference type="HOGENOM" id="CLU_181850_1_0_1"/>
<dbReference type="InParanoid" id="Q55FV2"/>
<dbReference type="PRO" id="PR:Q55FV2"/>
<dbReference type="Proteomes" id="UP000002195">
    <property type="component" value="Chromosome 1"/>
</dbReference>
<dbReference type="GO" id="GO:0030587">
    <property type="term" value="P:sorocarp development"/>
    <property type="evidence" value="ECO:0000318"/>
    <property type="project" value="GO_Central"/>
</dbReference>
<dbReference type="InterPro" id="IPR050533">
    <property type="entry name" value="HssA/B-like_chaperone"/>
</dbReference>
<dbReference type="InterPro" id="IPR008455">
    <property type="entry name" value="HssA/B-related"/>
</dbReference>
<dbReference type="PANTHER" id="PTHR31059">
    <property type="entry name" value="HSSA/B-LIKE PROTEIN 1-RELATED-RELATED"/>
    <property type="match status" value="1"/>
</dbReference>
<dbReference type="PANTHER" id="PTHR31059:SF5">
    <property type="entry name" value="HSSA_B-LIKE PROTEIN 1-RELATED"/>
    <property type="match status" value="1"/>
</dbReference>
<dbReference type="Pfam" id="PF05710">
    <property type="entry name" value="Coiled"/>
    <property type="match status" value="1"/>
</dbReference>
<keyword id="KW-1185">Reference proteome</keyword>
<evidence type="ECO:0000256" key="1">
    <source>
        <dbReference type="SAM" id="MobiDB-lite"/>
    </source>
</evidence>
<evidence type="ECO:0000305" key="2"/>
<comment type="similarity">
    <text evidence="2">Belongs to the hssA/B family.</text>
</comment>